<accession>P41081</accession>
<comment type="function">
    <text evidence="1">One of the primary rRNA binding proteins, it binds directly to 16S rRNA where it nucleates assembly of the head domain of the 30S subunit. Is located at the subunit interface close to the decoding center, probably blocks exit of the E-site tRNA.</text>
</comment>
<comment type="subunit">
    <text evidence="1">Part of the 30S ribosomal subunit. Contacts proteins S9 and S11.</text>
</comment>
<comment type="similarity">
    <text evidence="1">Belongs to the universal ribosomal protein uS7 family.</text>
</comment>
<reference key="1">
    <citation type="submission" date="1993-10" db="EMBL/GenBank/DDBJ databases">
        <authorList>
            <person name="Wood D.O."/>
        </authorList>
    </citation>
    <scope>NUCLEOTIDE SEQUENCE [GENOMIC DNA]</scope>
    <source>
        <strain>Madrid E</strain>
    </source>
</reference>
<reference key="2">
    <citation type="journal article" date="1998" name="Nature">
        <title>The genome sequence of Rickettsia prowazekii and the origin of mitochondria.</title>
        <authorList>
            <person name="Andersson S.G.E."/>
            <person name="Zomorodipour A."/>
            <person name="Andersson J.O."/>
            <person name="Sicheritz-Ponten T."/>
            <person name="Alsmark U.C.M."/>
            <person name="Podowski R.M."/>
            <person name="Naeslund A.K."/>
            <person name="Eriksson A.-S."/>
            <person name="Winkler H.H."/>
            <person name="Kurland C.G."/>
        </authorList>
    </citation>
    <scope>NUCLEOTIDE SEQUENCE [LARGE SCALE GENOMIC DNA]</scope>
    <source>
        <strain>Madrid E</strain>
    </source>
</reference>
<gene>
    <name evidence="1" type="primary">rpsG</name>
    <name type="ordered locus">RP131</name>
</gene>
<protein>
    <recommendedName>
        <fullName evidence="1">Small ribosomal subunit protein uS7</fullName>
    </recommendedName>
    <alternativeName>
        <fullName evidence="2">30S ribosomal protein S7</fullName>
    </alternativeName>
</protein>
<proteinExistence type="inferred from homology"/>
<dbReference type="EMBL" id="U02603">
    <property type="protein sequence ID" value="AAA18330.1"/>
    <property type="molecule type" value="Unassigned_DNA"/>
</dbReference>
<dbReference type="EMBL" id="AJ235270">
    <property type="protein sequence ID" value="CAA14600.1"/>
    <property type="molecule type" value="Genomic_DNA"/>
</dbReference>
<dbReference type="PIR" id="A71723">
    <property type="entry name" value="A71723"/>
</dbReference>
<dbReference type="RefSeq" id="NP_220523.1">
    <property type="nucleotide sequence ID" value="NC_000963.1"/>
</dbReference>
<dbReference type="RefSeq" id="WP_004597175.1">
    <property type="nucleotide sequence ID" value="NC_000963.1"/>
</dbReference>
<dbReference type="SMR" id="P41081"/>
<dbReference type="STRING" id="272947.gene:17555214"/>
<dbReference type="EnsemblBacteria" id="CAA14600">
    <property type="protein sequence ID" value="CAA14600"/>
    <property type="gene ID" value="CAA14600"/>
</dbReference>
<dbReference type="GeneID" id="57569259"/>
<dbReference type="KEGG" id="rpr:RP131"/>
<dbReference type="PATRIC" id="fig|272947.5.peg.133"/>
<dbReference type="eggNOG" id="COG0049">
    <property type="taxonomic scope" value="Bacteria"/>
</dbReference>
<dbReference type="HOGENOM" id="CLU_072226_1_1_5"/>
<dbReference type="OrthoDB" id="9807653at2"/>
<dbReference type="Proteomes" id="UP000002480">
    <property type="component" value="Chromosome"/>
</dbReference>
<dbReference type="GO" id="GO:0015935">
    <property type="term" value="C:small ribosomal subunit"/>
    <property type="evidence" value="ECO:0007669"/>
    <property type="project" value="InterPro"/>
</dbReference>
<dbReference type="GO" id="GO:0019843">
    <property type="term" value="F:rRNA binding"/>
    <property type="evidence" value="ECO:0007669"/>
    <property type="project" value="UniProtKB-UniRule"/>
</dbReference>
<dbReference type="GO" id="GO:0003735">
    <property type="term" value="F:structural constituent of ribosome"/>
    <property type="evidence" value="ECO:0007669"/>
    <property type="project" value="InterPro"/>
</dbReference>
<dbReference type="GO" id="GO:0000049">
    <property type="term" value="F:tRNA binding"/>
    <property type="evidence" value="ECO:0007669"/>
    <property type="project" value="UniProtKB-UniRule"/>
</dbReference>
<dbReference type="GO" id="GO:0006412">
    <property type="term" value="P:translation"/>
    <property type="evidence" value="ECO:0007669"/>
    <property type="project" value="UniProtKB-UniRule"/>
</dbReference>
<dbReference type="CDD" id="cd14869">
    <property type="entry name" value="uS7_Bacteria"/>
    <property type="match status" value="1"/>
</dbReference>
<dbReference type="FunFam" id="1.10.455.10:FF:000001">
    <property type="entry name" value="30S ribosomal protein S7"/>
    <property type="match status" value="1"/>
</dbReference>
<dbReference type="Gene3D" id="1.10.455.10">
    <property type="entry name" value="Ribosomal protein S7 domain"/>
    <property type="match status" value="1"/>
</dbReference>
<dbReference type="HAMAP" id="MF_00480_B">
    <property type="entry name" value="Ribosomal_uS7_B"/>
    <property type="match status" value="1"/>
</dbReference>
<dbReference type="InterPro" id="IPR000235">
    <property type="entry name" value="Ribosomal_uS7"/>
</dbReference>
<dbReference type="InterPro" id="IPR005717">
    <property type="entry name" value="Ribosomal_uS7_bac/org-type"/>
</dbReference>
<dbReference type="InterPro" id="IPR020606">
    <property type="entry name" value="Ribosomal_uS7_CS"/>
</dbReference>
<dbReference type="InterPro" id="IPR023798">
    <property type="entry name" value="Ribosomal_uS7_dom"/>
</dbReference>
<dbReference type="InterPro" id="IPR036823">
    <property type="entry name" value="Ribosomal_uS7_dom_sf"/>
</dbReference>
<dbReference type="NCBIfam" id="TIGR01029">
    <property type="entry name" value="rpsG_bact"/>
    <property type="match status" value="1"/>
</dbReference>
<dbReference type="PANTHER" id="PTHR11205">
    <property type="entry name" value="RIBOSOMAL PROTEIN S7"/>
    <property type="match status" value="1"/>
</dbReference>
<dbReference type="Pfam" id="PF00177">
    <property type="entry name" value="Ribosomal_S7"/>
    <property type="match status" value="1"/>
</dbReference>
<dbReference type="PIRSF" id="PIRSF002122">
    <property type="entry name" value="RPS7p_RPS7a_RPS5e_RPS7o"/>
    <property type="match status" value="1"/>
</dbReference>
<dbReference type="SUPFAM" id="SSF47973">
    <property type="entry name" value="Ribosomal protein S7"/>
    <property type="match status" value="1"/>
</dbReference>
<dbReference type="PROSITE" id="PS00052">
    <property type="entry name" value="RIBOSOMAL_S7"/>
    <property type="match status" value="1"/>
</dbReference>
<evidence type="ECO:0000255" key="1">
    <source>
        <dbReference type="HAMAP-Rule" id="MF_00480"/>
    </source>
</evidence>
<evidence type="ECO:0000305" key="2"/>
<organism>
    <name type="scientific">Rickettsia prowazekii (strain Madrid E)</name>
    <dbReference type="NCBI Taxonomy" id="272947"/>
    <lineage>
        <taxon>Bacteria</taxon>
        <taxon>Pseudomonadati</taxon>
        <taxon>Pseudomonadota</taxon>
        <taxon>Alphaproteobacteria</taxon>
        <taxon>Rickettsiales</taxon>
        <taxon>Rickettsiaceae</taxon>
        <taxon>Rickettsieae</taxon>
        <taxon>Rickettsia</taxon>
        <taxon>typhus group</taxon>
    </lineage>
</organism>
<keyword id="KW-1185">Reference proteome</keyword>
<keyword id="KW-0687">Ribonucleoprotein</keyword>
<keyword id="KW-0689">Ribosomal protein</keyword>
<keyword id="KW-0694">RNA-binding</keyword>
<keyword id="KW-0699">rRNA-binding</keyword>
<keyword id="KW-0820">tRNA-binding</keyword>
<name>RS7_RICPR</name>
<sequence>MSRRHVAEKRIILPDMKYNSILLSRFINNIMKAGKKAVAEKIVYSALNKIEKKHSVDPYQTFNNAMHNVKPHLEVTSVRVGGANYQVPTHVDERRGYALASRWIINAASKRSEKMMIDKLAEELFEASNNRGVAIKKKEDTHKMAEANKAFSHFSPKKMK</sequence>
<feature type="chain" id="PRO_0000124332" description="Small ribosomal subunit protein uS7">
    <location>
        <begin position="1"/>
        <end position="160"/>
    </location>
</feature>